<reference key="1">
    <citation type="journal article" date="2006" name="PLoS Biol.">
        <title>Macronuclear genome sequence of the ciliate Tetrahymena thermophila, a model eukaryote.</title>
        <authorList>
            <person name="Eisen J.A."/>
            <person name="Coyne R.S."/>
            <person name="Wu M."/>
            <person name="Wu D."/>
            <person name="Thiagarajan M."/>
            <person name="Wortman J.R."/>
            <person name="Badger J.H."/>
            <person name="Ren Q."/>
            <person name="Amedeo P."/>
            <person name="Jones K.M."/>
            <person name="Tallon L.J."/>
            <person name="Delcher A.L."/>
            <person name="Salzberg S.L."/>
            <person name="Silva J.C."/>
            <person name="Haas B.J."/>
            <person name="Majoros W.H."/>
            <person name="Farzad M."/>
            <person name="Carlton J.M."/>
            <person name="Smith R.K. Jr."/>
            <person name="Garg J."/>
            <person name="Pearlman R.E."/>
            <person name="Karrer K.M."/>
            <person name="Sun L."/>
            <person name="Manning G."/>
            <person name="Elde N.C."/>
            <person name="Turkewitz A.P."/>
            <person name="Asai D.J."/>
            <person name="Wilkes D.E."/>
            <person name="Wang Y."/>
            <person name="Cai H."/>
            <person name="Collins K."/>
            <person name="Stewart B.A."/>
            <person name="Lee S.R."/>
            <person name="Wilamowska K."/>
            <person name="Weinberg Z."/>
            <person name="Ruzzo W.L."/>
            <person name="Wloga D."/>
            <person name="Gaertig J."/>
            <person name="Frankel J."/>
            <person name="Tsao C.-C."/>
            <person name="Gorovsky M.A."/>
            <person name="Keeling P.J."/>
            <person name="Waller R.F."/>
            <person name="Patron N.J."/>
            <person name="Cherry J.M."/>
            <person name="Stover N.A."/>
            <person name="Krieger C.J."/>
            <person name="del Toro C."/>
            <person name="Ryder H.F."/>
            <person name="Williamson S.C."/>
            <person name="Barbeau R.A."/>
            <person name="Hamilton E.P."/>
            <person name="Orias E."/>
        </authorList>
    </citation>
    <scope>NUCLEOTIDE SEQUENCE [LARGE SCALE GENOMIC DNA]</scope>
    <source>
        <strain>SB210</strain>
    </source>
</reference>
<reference key="2">
    <citation type="journal article" date="2009" name="Dev. Cell">
        <title>TTLL3 Is a tubulin glycine ligase that regulates the assembly of cilia.</title>
        <authorList>
            <person name="Wloga D."/>
            <person name="Webster D.M."/>
            <person name="Rogowski K."/>
            <person name="Bre M.-H."/>
            <person name="Levilliers N."/>
            <person name="Jerka-Dziadosz M."/>
            <person name="Janke C."/>
            <person name="Dougan S.T."/>
            <person name="Gaertig J."/>
        </authorList>
    </citation>
    <scope>SUBCELLULAR LOCATION</scope>
    <scope>DISRUPTION PHENOTYPE</scope>
</reference>
<evidence type="ECO:0000250" key="1"/>
<evidence type="ECO:0000250" key="2">
    <source>
        <dbReference type="UniProtKB" id="Q6ZT98"/>
    </source>
</evidence>
<evidence type="ECO:0000255" key="3">
    <source>
        <dbReference type="PROSITE-ProRule" id="PRU00568"/>
    </source>
</evidence>
<evidence type="ECO:0000269" key="4">
    <source>
    </source>
</evidence>
<protein>
    <recommendedName>
        <fullName>Tubulin glycylase 3F</fullName>
        <ecNumber>6.3.2.-</ecNumber>
    </recommendedName>
</protein>
<comment type="function">
    <text evidence="1">Probable glycylase which modifies tubulin, generating side chains of glycine on the gamma-carboxyl groups of specific glutamate residues within the C-terminal tail of tubulin.</text>
</comment>
<comment type="subcellular location">
    <subcellularLocation>
        <location evidence="1">Cytoplasm</location>
        <location evidence="1">Cytoskeleton</location>
        <location evidence="1">Cilium basal body</location>
    </subcellularLocation>
</comment>
<comment type="disruption phenotype">
    <text evidence="4">Cells lacking TTLL3A, TTLL3B, TTLL3C, TTLL3D, TTLL3E and TTLL3F display shortened axonemes that are resistant to paclitaxel, indicating that tubulin glycylation changes the lattice properties of axonemal microtubules. Axonemes are however normal at the ultrastructural level.</text>
</comment>
<keyword id="KW-0067">ATP-binding</keyword>
<keyword id="KW-0966">Cell projection</keyword>
<keyword id="KW-0969">Cilium</keyword>
<keyword id="KW-0963">Cytoplasm</keyword>
<keyword id="KW-0206">Cytoskeleton</keyword>
<keyword id="KW-0436">Ligase</keyword>
<keyword id="KW-0547">Nucleotide-binding</keyword>
<keyword id="KW-1185">Reference proteome</keyword>
<dbReference type="EC" id="6.3.2.-"/>
<dbReference type="EMBL" id="GG662605">
    <property type="protein sequence ID" value="EAS01070.2"/>
    <property type="molecule type" value="Genomic_DNA"/>
</dbReference>
<dbReference type="RefSeq" id="XP_001021315.2">
    <property type="nucleotide sequence ID" value="XM_001021315.2"/>
</dbReference>
<dbReference type="STRING" id="312017.P0CAZ1"/>
<dbReference type="EnsemblProtists" id="EAS01070">
    <property type="protein sequence ID" value="EAS01070"/>
    <property type="gene ID" value="TTHERM_00316230"/>
</dbReference>
<dbReference type="GeneID" id="7829708"/>
<dbReference type="KEGG" id="tet:TTHERM_00316230"/>
<dbReference type="eggNOG" id="KOG2157">
    <property type="taxonomic scope" value="Eukaryota"/>
</dbReference>
<dbReference type="HOGENOM" id="CLU_319721_0_0_1"/>
<dbReference type="InParanoid" id="P0CAZ1"/>
<dbReference type="OrthoDB" id="202825at2759"/>
<dbReference type="Proteomes" id="UP000009168">
    <property type="component" value="Unassembled WGS sequence"/>
</dbReference>
<dbReference type="GO" id="GO:0005929">
    <property type="term" value="C:cilium"/>
    <property type="evidence" value="ECO:0000314"/>
    <property type="project" value="UniProtKB"/>
</dbReference>
<dbReference type="GO" id="GO:0005737">
    <property type="term" value="C:cytoplasm"/>
    <property type="evidence" value="ECO:0007669"/>
    <property type="project" value="UniProtKB-KW"/>
</dbReference>
<dbReference type="GO" id="GO:0015630">
    <property type="term" value="C:microtubule cytoskeleton"/>
    <property type="evidence" value="ECO:0007669"/>
    <property type="project" value="TreeGrafter"/>
</dbReference>
<dbReference type="GO" id="GO:0005524">
    <property type="term" value="F:ATP binding"/>
    <property type="evidence" value="ECO:0007669"/>
    <property type="project" value="UniProtKB-KW"/>
</dbReference>
<dbReference type="GO" id="GO:0070735">
    <property type="term" value="F:protein-glycine ligase activity"/>
    <property type="evidence" value="ECO:0000304"/>
    <property type="project" value="UniProtKB"/>
</dbReference>
<dbReference type="GO" id="GO:0070736">
    <property type="term" value="F:protein-glycine ligase activity, initiating"/>
    <property type="evidence" value="ECO:0007669"/>
    <property type="project" value="TreeGrafter"/>
</dbReference>
<dbReference type="GO" id="GO:0018094">
    <property type="term" value="P:protein polyglycylation"/>
    <property type="evidence" value="ECO:0000304"/>
    <property type="project" value="UniProtKB"/>
</dbReference>
<dbReference type="Gene3D" id="3.30.470.20">
    <property type="entry name" value="ATP-grasp fold, B domain"/>
    <property type="match status" value="1"/>
</dbReference>
<dbReference type="InterPro" id="IPR004344">
    <property type="entry name" value="TTL/TTLL_fam"/>
</dbReference>
<dbReference type="InterPro" id="IPR051437">
    <property type="entry name" value="TTLL_monoglycylase"/>
</dbReference>
<dbReference type="PANTHER" id="PTHR45870">
    <property type="entry name" value="TUBULIN MONOGLYCYLASE TTLL3"/>
    <property type="match status" value="1"/>
</dbReference>
<dbReference type="PANTHER" id="PTHR45870:SF2">
    <property type="entry name" value="TUBULIN MONOGLYCYLASE TTLL3"/>
    <property type="match status" value="1"/>
</dbReference>
<dbReference type="Pfam" id="PF03133">
    <property type="entry name" value="TTL"/>
    <property type="match status" value="1"/>
</dbReference>
<dbReference type="SUPFAM" id="SSF56059">
    <property type="entry name" value="Glutathione synthetase ATP-binding domain-like"/>
    <property type="match status" value="1"/>
</dbReference>
<dbReference type="PROSITE" id="PS51221">
    <property type="entry name" value="TTL"/>
    <property type="match status" value="1"/>
</dbReference>
<organism>
    <name type="scientific">Tetrahymena thermophila (strain SB210)</name>
    <dbReference type="NCBI Taxonomy" id="312017"/>
    <lineage>
        <taxon>Eukaryota</taxon>
        <taxon>Sar</taxon>
        <taxon>Alveolata</taxon>
        <taxon>Ciliophora</taxon>
        <taxon>Intramacronucleata</taxon>
        <taxon>Oligohymenophorea</taxon>
        <taxon>Hymenostomatida</taxon>
        <taxon>Tetrahymenina</taxon>
        <taxon>Tetrahymenidae</taxon>
        <taxon>Tetrahymena</taxon>
    </lineage>
</organism>
<feature type="chain" id="PRO_0000381802" description="Tubulin glycylase 3F">
    <location>
        <begin position="1"/>
        <end position="899"/>
    </location>
</feature>
<feature type="domain" description="TTL" evidence="3">
    <location>
        <begin position="471"/>
        <end position="835"/>
    </location>
</feature>
<feature type="binding site" evidence="2">
    <location>
        <begin position="642"/>
        <end position="645"/>
    </location>
    <ligand>
        <name>ATP</name>
        <dbReference type="ChEBI" id="CHEBI:30616"/>
    </ligand>
</feature>
<feature type="binding site" evidence="2">
    <location>
        <position position="663"/>
    </location>
    <ligand>
        <name>ATP</name>
        <dbReference type="ChEBI" id="CHEBI:30616"/>
    </ligand>
</feature>
<feature type="binding site" evidence="2">
    <location>
        <position position="665"/>
    </location>
    <ligand>
        <name>ATP</name>
        <dbReference type="ChEBI" id="CHEBI:30616"/>
    </ligand>
</feature>
<sequence>MSDRIYHSYVNNFYQKAKSPKNTQLIKQIQRSNPTSPKKNLQIYKNINPFNHENCQRIIEENAIRFSDKKTVQLGTVYGCNILLTTKNSQPKVFEKLIQLSDNSNFRQVTLLKSISPVSVVKAKDFLNDSISNRSRSAQKMYSDKDKFQVGNNKSSLRSLIYFPLANIKDQISEESKSKRNKIKVIKDMPIQLDNSFQTINHQINSPNNNIVGDQSHVILHNIFKKRQQAEEGLQIQEEPQNYIKNKLELQERKMYLENQNPKSLSPIKIHFNEKSMPFKNKIQKKITYNEQSSIQQTITLIKKKILGPPSLYSRLKKNSEQFKNIENLIKNKAKESHEQNMQEYLKRIGCTDKNKKVFCINSQDQFVQEVLIELGWIENKLFKSDLFHLKWIYTDINKDYENLKEGQFYNHFQNNQELTNKGRLLRNIKLYLVSYPHLQKYFPIQFDVIYKQQKEEFLNEFQKFEIFRKFKDVIQIIKNDLTQELINQLTQIYHTKFIKKEEEEELQYGLITYFRQNQQFKQYIEYINQVNKDIINLLSKIPNPNINEMLIKYLNDLSILQVDKLECDQEQGDKNIQAQIINLSISIELDNILEQIYPYTNFCNFWIIKPCGSSKGQGLQIMSDDNQIVNYTTQLQARLVQKYIERIYICKSQEYPQLYNKKFDLRLWVLVKSFNPLTVYYYKHAYLRVCSSEYDLSDTRNIFSHFTNYSINRNKFIQNKNVEDSAISLKLLKHIIKKEHGISYQKKIQPQINEIIIHSLKSVQKKIKQNNSCFEIYGFDIIFDEQFNPYLLEVNLSPACSKRNEFISKLQKEMFISTLNILFNTEYYQIQNWKKIKIQDQIQKVINESTHTQLQEEVILNSNNFQSEDSEERFISAAITIQKWYRQIKLMKNENQKI</sequence>
<gene>
    <name type="primary">TTLL3F</name>
    <name type="ORF">TTHERM_00316230</name>
</gene>
<accession>P0CAZ1</accession>
<name>TTL3F_TETTS</name>
<proteinExistence type="inferred from homology"/>